<proteinExistence type="inferred from homology"/>
<sequence>MTLLNPFFGEFGGMYVPQILIPALLQLEKAFVDAKDDPAFIAEFQTLLTEYAGRPTPLTLTRNLTKGTKTRLYLKREDLLHGGAHKTNQVLGQALLAKRMGKSEIIAETGAGQHGVATALACALLGLKCRVYMGAKDCERQKPNVFRMKLMGATVIPVHSGSSTLKDACNEALRDWAANYESAHYLLGTAAGPHPFPTIVREFQKMIGEEAKAQCFEKEERLPDAVIACVGGGSNAIGMFADFIDEPSVRLIGVEPGGHGIESGEHGAPLGHGSKGVFFGMHSYLMQDTQGQIQESYSVSAGLDFPSVGPQHAHLAAIGRAEYPSVTDKEALDAFQELAKSEGIIPALESSHALAHALKMARSEPEKEQVLIVNLSGRGDKDIFTVADIFEKEGTLS</sequence>
<name>TRPB_AERHH</name>
<accession>A0KMD0</accession>
<keyword id="KW-0028">Amino-acid biosynthesis</keyword>
<keyword id="KW-0057">Aromatic amino acid biosynthesis</keyword>
<keyword id="KW-0456">Lyase</keyword>
<keyword id="KW-0663">Pyridoxal phosphate</keyword>
<keyword id="KW-1185">Reference proteome</keyword>
<keyword id="KW-0822">Tryptophan biosynthesis</keyword>
<dbReference type="EC" id="4.2.1.20" evidence="1"/>
<dbReference type="EMBL" id="CP000462">
    <property type="protein sequence ID" value="ABK35893.1"/>
    <property type="molecule type" value="Genomic_DNA"/>
</dbReference>
<dbReference type="RefSeq" id="WP_011706727.1">
    <property type="nucleotide sequence ID" value="NC_008570.1"/>
</dbReference>
<dbReference type="RefSeq" id="YP_857431.1">
    <property type="nucleotide sequence ID" value="NC_008570.1"/>
</dbReference>
<dbReference type="SMR" id="A0KMD0"/>
<dbReference type="STRING" id="380703.AHA_2927"/>
<dbReference type="EnsemblBacteria" id="ABK35893">
    <property type="protein sequence ID" value="ABK35893"/>
    <property type="gene ID" value="AHA_2927"/>
</dbReference>
<dbReference type="GeneID" id="4487722"/>
<dbReference type="KEGG" id="aha:AHA_2927"/>
<dbReference type="PATRIC" id="fig|380703.7.peg.2925"/>
<dbReference type="eggNOG" id="COG0133">
    <property type="taxonomic scope" value="Bacteria"/>
</dbReference>
<dbReference type="HOGENOM" id="CLU_016734_3_1_6"/>
<dbReference type="OrthoDB" id="9766131at2"/>
<dbReference type="UniPathway" id="UPA00035">
    <property type="reaction ID" value="UER00044"/>
</dbReference>
<dbReference type="Proteomes" id="UP000000756">
    <property type="component" value="Chromosome"/>
</dbReference>
<dbReference type="GO" id="GO:0005737">
    <property type="term" value="C:cytoplasm"/>
    <property type="evidence" value="ECO:0007669"/>
    <property type="project" value="TreeGrafter"/>
</dbReference>
<dbReference type="GO" id="GO:0004834">
    <property type="term" value="F:tryptophan synthase activity"/>
    <property type="evidence" value="ECO:0007669"/>
    <property type="project" value="UniProtKB-UniRule"/>
</dbReference>
<dbReference type="CDD" id="cd06446">
    <property type="entry name" value="Trp-synth_B"/>
    <property type="match status" value="1"/>
</dbReference>
<dbReference type="FunFam" id="3.40.50.1100:FF:000001">
    <property type="entry name" value="Tryptophan synthase beta chain"/>
    <property type="match status" value="1"/>
</dbReference>
<dbReference type="FunFam" id="3.40.50.1100:FF:000004">
    <property type="entry name" value="Tryptophan synthase beta chain"/>
    <property type="match status" value="1"/>
</dbReference>
<dbReference type="Gene3D" id="3.40.50.1100">
    <property type="match status" value="2"/>
</dbReference>
<dbReference type="HAMAP" id="MF_00133">
    <property type="entry name" value="Trp_synth_beta"/>
    <property type="match status" value="1"/>
</dbReference>
<dbReference type="InterPro" id="IPR006653">
    <property type="entry name" value="Trp_synth_b_CS"/>
</dbReference>
<dbReference type="InterPro" id="IPR006654">
    <property type="entry name" value="Trp_synth_beta"/>
</dbReference>
<dbReference type="InterPro" id="IPR023026">
    <property type="entry name" value="Trp_synth_beta/beta-like"/>
</dbReference>
<dbReference type="InterPro" id="IPR001926">
    <property type="entry name" value="TrpB-like_PALP"/>
</dbReference>
<dbReference type="InterPro" id="IPR036052">
    <property type="entry name" value="TrpB-like_PALP_sf"/>
</dbReference>
<dbReference type="NCBIfam" id="TIGR00263">
    <property type="entry name" value="trpB"/>
    <property type="match status" value="1"/>
</dbReference>
<dbReference type="PANTHER" id="PTHR48077:SF3">
    <property type="entry name" value="TRYPTOPHAN SYNTHASE"/>
    <property type="match status" value="1"/>
</dbReference>
<dbReference type="PANTHER" id="PTHR48077">
    <property type="entry name" value="TRYPTOPHAN SYNTHASE-RELATED"/>
    <property type="match status" value="1"/>
</dbReference>
<dbReference type="Pfam" id="PF00291">
    <property type="entry name" value="PALP"/>
    <property type="match status" value="1"/>
</dbReference>
<dbReference type="PIRSF" id="PIRSF001413">
    <property type="entry name" value="Trp_syn_beta"/>
    <property type="match status" value="1"/>
</dbReference>
<dbReference type="SUPFAM" id="SSF53686">
    <property type="entry name" value="Tryptophan synthase beta subunit-like PLP-dependent enzymes"/>
    <property type="match status" value="1"/>
</dbReference>
<dbReference type="PROSITE" id="PS00168">
    <property type="entry name" value="TRP_SYNTHASE_BETA"/>
    <property type="match status" value="1"/>
</dbReference>
<protein>
    <recommendedName>
        <fullName evidence="1">Tryptophan synthase beta chain</fullName>
        <ecNumber evidence="1">4.2.1.20</ecNumber>
    </recommendedName>
</protein>
<feature type="chain" id="PRO_1000076378" description="Tryptophan synthase beta chain">
    <location>
        <begin position="1"/>
        <end position="397"/>
    </location>
</feature>
<feature type="modified residue" description="N6-(pyridoxal phosphate)lysine" evidence="1">
    <location>
        <position position="86"/>
    </location>
</feature>
<comment type="function">
    <text evidence="1">The beta subunit is responsible for the synthesis of L-tryptophan from indole and L-serine.</text>
</comment>
<comment type="catalytic activity">
    <reaction evidence="1">
        <text>(1S,2R)-1-C-(indol-3-yl)glycerol 3-phosphate + L-serine = D-glyceraldehyde 3-phosphate + L-tryptophan + H2O</text>
        <dbReference type="Rhea" id="RHEA:10532"/>
        <dbReference type="ChEBI" id="CHEBI:15377"/>
        <dbReference type="ChEBI" id="CHEBI:33384"/>
        <dbReference type="ChEBI" id="CHEBI:57912"/>
        <dbReference type="ChEBI" id="CHEBI:58866"/>
        <dbReference type="ChEBI" id="CHEBI:59776"/>
        <dbReference type="EC" id="4.2.1.20"/>
    </reaction>
</comment>
<comment type="cofactor">
    <cofactor evidence="1">
        <name>pyridoxal 5'-phosphate</name>
        <dbReference type="ChEBI" id="CHEBI:597326"/>
    </cofactor>
</comment>
<comment type="pathway">
    <text evidence="1">Amino-acid biosynthesis; L-tryptophan biosynthesis; L-tryptophan from chorismate: step 5/5.</text>
</comment>
<comment type="subunit">
    <text evidence="1">Tetramer of two alpha and two beta chains.</text>
</comment>
<comment type="similarity">
    <text evidence="1">Belongs to the TrpB family.</text>
</comment>
<reference key="1">
    <citation type="journal article" date="2006" name="J. Bacteriol.">
        <title>Genome sequence of Aeromonas hydrophila ATCC 7966T: jack of all trades.</title>
        <authorList>
            <person name="Seshadri R."/>
            <person name="Joseph S.W."/>
            <person name="Chopra A.K."/>
            <person name="Sha J."/>
            <person name="Shaw J."/>
            <person name="Graf J."/>
            <person name="Haft D.H."/>
            <person name="Wu M."/>
            <person name="Ren Q."/>
            <person name="Rosovitz M.J."/>
            <person name="Madupu R."/>
            <person name="Tallon L."/>
            <person name="Kim M."/>
            <person name="Jin S."/>
            <person name="Vuong H."/>
            <person name="Stine O.C."/>
            <person name="Ali A."/>
            <person name="Horneman A.J."/>
            <person name="Heidelberg J.F."/>
        </authorList>
    </citation>
    <scope>NUCLEOTIDE SEQUENCE [LARGE SCALE GENOMIC DNA]</scope>
    <source>
        <strain>ATCC 7966 / DSM 30187 / BCRC 13018 / CCUG 14551 / JCM 1027 / KCTC 2358 / NCIMB 9240 / NCTC 8049</strain>
    </source>
</reference>
<organism>
    <name type="scientific">Aeromonas hydrophila subsp. hydrophila (strain ATCC 7966 / DSM 30187 / BCRC 13018 / CCUG 14551 / JCM 1027 / KCTC 2358 / NCIMB 9240 / NCTC 8049)</name>
    <dbReference type="NCBI Taxonomy" id="380703"/>
    <lineage>
        <taxon>Bacteria</taxon>
        <taxon>Pseudomonadati</taxon>
        <taxon>Pseudomonadota</taxon>
        <taxon>Gammaproteobacteria</taxon>
        <taxon>Aeromonadales</taxon>
        <taxon>Aeromonadaceae</taxon>
        <taxon>Aeromonas</taxon>
    </lineage>
</organism>
<evidence type="ECO:0000255" key="1">
    <source>
        <dbReference type="HAMAP-Rule" id="MF_00133"/>
    </source>
</evidence>
<gene>
    <name evidence="1" type="primary">trpB</name>
    <name type="ordered locus">AHA_2927</name>
</gene>